<feature type="signal peptide" evidence="1">
    <location>
        <begin position="1"/>
        <end position="23"/>
    </location>
</feature>
<feature type="chain" id="PRO_0000004245" description="Carbonic anhydrase-related protein 11">
    <location>
        <begin position="24"/>
        <end position="328"/>
    </location>
</feature>
<feature type="domain" description="Alpha-carbonic anhydrase" evidence="2">
    <location>
        <begin position="33"/>
        <end position="303"/>
    </location>
</feature>
<feature type="region of interest" description="Disordered" evidence="3">
    <location>
        <begin position="299"/>
        <end position="328"/>
    </location>
</feature>
<feature type="compositionally biased region" description="Basic and acidic residues" evidence="3">
    <location>
        <begin position="319"/>
        <end position="328"/>
    </location>
</feature>
<feature type="glycosylation site" description="N-linked (GlcNAc...) asparagine" evidence="4">
    <location>
        <position position="118"/>
    </location>
</feature>
<feature type="glycosylation site" description="N-linked (GlcNAc...) asparagine" evidence="1">
    <location>
        <position position="170"/>
    </location>
</feature>
<feature type="glycosylation site" description="N-linked (GlcNAc...) asparagine" evidence="1">
    <location>
        <position position="260"/>
    </location>
</feature>
<feature type="sequence conflict" description="In Ref. 2; BAA36840." evidence="5" ref="2">
    <original>AH</original>
    <variation>GN</variation>
    <location>
        <begin position="23"/>
        <end position="24"/>
    </location>
</feature>
<feature type="sequence conflict" description="In Ref. 1; AAC99689." evidence="5" ref="1">
    <original>L</original>
    <variation>V</variation>
    <location>
        <position position="75"/>
    </location>
</feature>
<feature type="sequence conflict" description="In Ref. 7; AAD08802." evidence="5" ref="7">
    <original>I</original>
    <variation>M</variation>
    <location>
        <position position="280"/>
    </location>
</feature>
<dbReference type="EMBL" id="AF067662">
    <property type="protein sequence ID" value="AAC99689.1"/>
    <property type="molecule type" value="mRNA"/>
</dbReference>
<dbReference type="EMBL" id="AB018195">
    <property type="protein sequence ID" value="BAA36840.1"/>
    <property type="molecule type" value="mRNA"/>
</dbReference>
<dbReference type="EMBL" id="AY358967">
    <property type="protein sequence ID" value="AAQ89326.1"/>
    <property type="molecule type" value="mRNA"/>
</dbReference>
<dbReference type="EMBL" id="CR541772">
    <property type="protein sequence ID" value="CAG46571.1"/>
    <property type="molecule type" value="mRNA"/>
</dbReference>
<dbReference type="EMBL" id="BT007265">
    <property type="protein sequence ID" value="AAP35929.1"/>
    <property type="molecule type" value="mRNA"/>
</dbReference>
<dbReference type="EMBL" id="BC002662">
    <property type="protein sequence ID" value="AAH02662.1"/>
    <property type="molecule type" value="mRNA"/>
</dbReference>
<dbReference type="EMBL" id="AF050106">
    <property type="protein sequence ID" value="AAD08802.1"/>
    <property type="molecule type" value="mRNA"/>
</dbReference>
<dbReference type="CCDS" id="CCDS12729.1"/>
<dbReference type="PIR" id="JE0375">
    <property type="entry name" value="JE0375"/>
</dbReference>
<dbReference type="RefSeq" id="NP_001208.2">
    <property type="nucleotide sequence ID" value="NM_001217.4"/>
</dbReference>
<dbReference type="SMR" id="O75493"/>
<dbReference type="BioGRID" id="107224">
    <property type="interactions" value="14"/>
</dbReference>
<dbReference type="FunCoup" id="O75493">
    <property type="interactions" value="153"/>
</dbReference>
<dbReference type="IntAct" id="O75493">
    <property type="interactions" value="8"/>
</dbReference>
<dbReference type="STRING" id="9606.ENSP00000084798"/>
<dbReference type="BindingDB" id="O75493"/>
<dbReference type="ChEMBL" id="CHEMBL2420"/>
<dbReference type="DrugBank" id="DB00909">
    <property type="generic name" value="Zonisamide"/>
</dbReference>
<dbReference type="DrugCentral" id="O75493"/>
<dbReference type="GlyCosmos" id="O75493">
    <property type="glycosylation" value="3 sites, No reported glycans"/>
</dbReference>
<dbReference type="GlyGen" id="O75493">
    <property type="glycosylation" value="3 sites, 2 N-linked glycans (2 sites)"/>
</dbReference>
<dbReference type="iPTMnet" id="O75493"/>
<dbReference type="PhosphoSitePlus" id="O75493"/>
<dbReference type="BioMuta" id="CA11"/>
<dbReference type="jPOST" id="O75493"/>
<dbReference type="MassIVE" id="O75493"/>
<dbReference type="PaxDb" id="9606-ENSP00000084798"/>
<dbReference type="PeptideAtlas" id="O75493"/>
<dbReference type="ProteomicsDB" id="50047"/>
<dbReference type="Antibodypedia" id="31755">
    <property type="antibodies" value="112 antibodies from 24 providers"/>
</dbReference>
<dbReference type="DNASU" id="770"/>
<dbReference type="Ensembl" id="ENST00000084798.9">
    <property type="protein sequence ID" value="ENSP00000084798.3"/>
    <property type="gene ID" value="ENSG00000063180.9"/>
</dbReference>
<dbReference type="GeneID" id="770"/>
<dbReference type="KEGG" id="hsa:770"/>
<dbReference type="MANE-Select" id="ENST00000084798.9">
    <property type="protein sequence ID" value="ENSP00000084798.3"/>
    <property type="RefSeq nucleotide sequence ID" value="NM_001217.5"/>
    <property type="RefSeq protein sequence ID" value="NP_001208.2"/>
</dbReference>
<dbReference type="UCSC" id="uc002pjz.2">
    <property type="organism name" value="human"/>
</dbReference>
<dbReference type="AGR" id="HGNC:1370"/>
<dbReference type="CTD" id="770"/>
<dbReference type="DisGeNET" id="770"/>
<dbReference type="GeneCards" id="CA11"/>
<dbReference type="HGNC" id="HGNC:1370">
    <property type="gene designation" value="CA11"/>
</dbReference>
<dbReference type="HPA" id="ENSG00000063180">
    <property type="expression patterns" value="Tissue enriched (brain)"/>
</dbReference>
<dbReference type="MIM" id="604644">
    <property type="type" value="gene"/>
</dbReference>
<dbReference type="neXtProt" id="NX_O75493"/>
<dbReference type="OpenTargets" id="ENSG00000063180"/>
<dbReference type="PharmGKB" id="PA25986"/>
<dbReference type="VEuPathDB" id="HostDB:ENSG00000063180"/>
<dbReference type="eggNOG" id="KOG0382">
    <property type="taxonomic scope" value="Eukaryota"/>
</dbReference>
<dbReference type="GeneTree" id="ENSGT00940000162098"/>
<dbReference type="HOGENOM" id="CLU_039326_7_0_1"/>
<dbReference type="InParanoid" id="O75493"/>
<dbReference type="OMA" id="HKNQNAC"/>
<dbReference type="OrthoDB" id="5978072at2759"/>
<dbReference type="PAN-GO" id="O75493">
    <property type="GO annotations" value="3 GO annotations based on evolutionary models"/>
</dbReference>
<dbReference type="PhylomeDB" id="O75493"/>
<dbReference type="TreeFam" id="TF352926"/>
<dbReference type="PathwayCommons" id="O75493"/>
<dbReference type="SignaLink" id="O75493"/>
<dbReference type="BioGRID-ORCS" id="770">
    <property type="hits" value="27 hits in 1161 CRISPR screens"/>
</dbReference>
<dbReference type="ChiTaRS" id="CA11">
    <property type="organism name" value="human"/>
</dbReference>
<dbReference type="GeneWiki" id="CA11"/>
<dbReference type="GenomeRNAi" id="770"/>
<dbReference type="Pharos" id="O75493">
    <property type="development level" value="Tchem"/>
</dbReference>
<dbReference type="PRO" id="PR:O75493"/>
<dbReference type="Proteomes" id="UP000005640">
    <property type="component" value="Chromosome 19"/>
</dbReference>
<dbReference type="RNAct" id="O75493">
    <property type="molecule type" value="protein"/>
</dbReference>
<dbReference type="Bgee" id="ENSG00000063180">
    <property type="expression patterns" value="Expressed in right hemisphere of cerebellum and 176 other cell types or tissues"/>
</dbReference>
<dbReference type="ExpressionAtlas" id="O75493">
    <property type="expression patterns" value="baseline and differential"/>
</dbReference>
<dbReference type="GO" id="GO:0016323">
    <property type="term" value="C:basolateral plasma membrane"/>
    <property type="evidence" value="ECO:0000318"/>
    <property type="project" value="GO_Central"/>
</dbReference>
<dbReference type="GO" id="GO:0005576">
    <property type="term" value="C:extracellular region"/>
    <property type="evidence" value="ECO:0007669"/>
    <property type="project" value="UniProtKB-SubCell"/>
</dbReference>
<dbReference type="GO" id="GO:0016836">
    <property type="term" value="F:hydro-lyase activity"/>
    <property type="evidence" value="ECO:0000318"/>
    <property type="project" value="GO_Central"/>
</dbReference>
<dbReference type="GO" id="GO:0008270">
    <property type="term" value="F:zinc ion binding"/>
    <property type="evidence" value="ECO:0007669"/>
    <property type="project" value="InterPro"/>
</dbReference>
<dbReference type="CDD" id="cd03121">
    <property type="entry name" value="alpha_CARP_X_XI_like"/>
    <property type="match status" value="1"/>
</dbReference>
<dbReference type="FunFam" id="3.10.200.10:FF:000002">
    <property type="entry name" value="Carbonic anhydrase-related protein 10"/>
    <property type="match status" value="1"/>
</dbReference>
<dbReference type="Gene3D" id="3.10.200.10">
    <property type="entry name" value="Alpha carbonic anhydrase"/>
    <property type="match status" value="1"/>
</dbReference>
<dbReference type="InterPro" id="IPR041878">
    <property type="entry name" value="Alpha_CARP_X/XI"/>
</dbReference>
<dbReference type="InterPro" id="IPR001148">
    <property type="entry name" value="CA_dom"/>
</dbReference>
<dbReference type="InterPro" id="IPR036398">
    <property type="entry name" value="CA_dom_sf"/>
</dbReference>
<dbReference type="InterPro" id="IPR023561">
    <property type="entry name" value="Carbonic_anhydrase_a-class"/>
</dbReference>
<dbReference type="PANTHER" id="PTHR18952">
    <property type="entry name" value="CARBONIC ANHYDRASE"/>
    <property type="match status" value="1"/>
</dbReference>
<dbReference type="PANTHER" id="PTHR18952:SF93">
    <property type="entry name" value="CARBONIC ANHYDRASE-RELATED PROTEIN 11"/>
    <property type="match status" value="1"/>
</dbReference>
<dbReference type="Pfam" id="PF00194">
    <property type="entry name" value="Carb_anhydrase"/>
    <property type="match status" value="1"/>
</dbReference>
<dbReference type="SMART" id="SM01057">
    <property type="entry name" value="Carb_anhydrase"/>
    <property type="match status" value="1"/>
</dbReference>
<dbReference type="SUPFAM" id="SSF51069">
    <property type="entry name" value="Carbonic anhydrase"/>
    <property type="match status" value="1"/>
</dbReference>
<dbReference type="PROSITE" id="PS51144">
    <property type="entry name" value="ALPHA_CA_2"/>
    <property type="match status" value="1"/>
</dbReference>
<accession>O75493</accession>
<accession>O60596</accession>
<accession>Q6FHI1</accession>
<accession>Q9UEC4</accession>
<evidence type="ECO:0000255" key="1"/>
<evidence type="ECO:0000255" key="2">
    <source>
        <dbReference type="PROSITE-ProRule" id="PRU01134"/>
    </source>
</evidence>
<evidence type="ECO:0000256" key="3">
    <source>
        <dbReference type="SAM" id="MobiDB-lite"/>
    </source>
</evidence>
<evidence type="ECO:0000269" key="4">
    <source>
    </source>
</evidence>
<evidence type="ECO:0000305" key="5"/>
<name>CAH11_HUMAN</name>
<proteinExistence type="evidence at protein level"/>
<reference key="1">
    <citation type="journal article" date="1998" name="Biochem. Biophys. Res. Commun.">
        <title>Sequence and tissue expression of a novel human carbonic anhydrase-related protein, CARP-2, mapping to chromosome 19q13.3.</title>
        <authorList>
            <person name="Bellingham J."/>
            <person name="Gregory-Evans K."/>
            <person name="Gregory-Evans C.Y."/>
        </authorList>
    </citation>
    <scope>NUCLEOTIDE SEQUENCE [MRNA]</scope>
</reference>
<reference key="2">
    <citation type="journal article" date="1999" name="Biochim. Biophys. Acta">
        <title>cDNA sequence, mRNA expression, and chromosomal localization of human carbonic anhydrase-related protein, CA-RP XI.</title>
        <authorList>
            <person name="Fujikawa-Adachi K."/>
            <person name="Nishimori I."/>
            <person name="Taguchi T."/>
            <person name="Yuri K."/>
            <person name="Onishi S."/>
        </authorList>
    </citation>
    <scope>NUCLEOTIDE SEQUENCE [MRNA]</scope>
    <source>
        <tissue>Pancreas</tissue>
    </source>
</reference>
<reference key="3">
    <citation type="journal article" date="2003" name="Genome Res.">
        <title>The secreted protein discovery initiative (SPDI), a large-scale effort to identify novel human secreted and transmembrane proteins: a bioinformatics assessment.</title>
        <authorList>
            <person name="Clark H.F."/>
            <person name="Gurney A.L."/>
            <person name="Abaya E."/>
            <person name="Baker K."/>
            <person name="Baldwin D.T."/>
            <person name="Brush J."/>
            <person name="Chen J."/>
            <person name="Chow B."/>
            <person name="Chui C."/>
            <person name="Crowley C."/>
            <person name="Currell B."/>
            <person name="Deuel B."/>
            <person name="Dowd P."/>
            <person name="Eaton D."/>
            <person name="Foster J.S."/>
            <person name="Grimaldi C."/>
            <person name="Gu Q."/>
            <person name="Hass P.E."/>
            <person name="Heldens S."/>
            <person name="Huang A."/>
            <person name="Kim H.S."/>
            <person name="Klimowski L."/>
            <person name="Jin Y."/>
            <person name="Johnson S."/>
            <person name="Lee J."/>
            <person name="Lewis L."/>
            <person name="Liao D."/>
            <person name="Mark M.R."/>
            <person name="Robbie E."/>
            <person name="Sanchez C."/>
            <person name="Schoenfeld J."/>
            <person name="Seshagiri S."/>
            <person name="Simmons L."/>
            <person name="Singh J."/>
            <person name="Smith V."/>
            <person name="Stinson J."/>
            <person name="Vagts A."/>
            <person name="Vandlen R.L."/>
            <person name="Watanabe C."/>
            <person name="Wieand D."/>
            <person name="Woods K."/>
            <person name="Xie M.-H."/>
            <person name="Yansura D.G."/>
            <person name="Yi S."/>
            <person name="Yu G."/>
            <person name="Yuan J."/>
            <person name="Zhang M."/>
            <person name="Zhang Z."/>
            <person name="Goddard A.D."/>
            <person name="Wood W.I."/>
            <person name="Godowski P.J."/>
            <person name="Gray A.M."/>
        </authorList>
    </citation>
    <scope>NUCLEOTIDE SEQUENCE [LARGE SCALE MRNA]</scope>
</reference>
<reference key="4">
    <citation type="submission" date="2003-05" db="EMBL/GenBank/DDBJ databases">
        <title>Cloning of human full-length CDSs in BD Creator(TM) system donor vector.</title>
        <authorList>
            <person name="Kalnine N."/>
            <person name="Chen X."/>
            <person name="Rolfs A."/>
            <person name="Halleck A."/>
            <person name="Hines L."/>
            <person name="Eisenstein S."/>
            <person name="Koundinya M."/>
            <person name="Raphael J."/>
            <person name="Moreira D."/>
            <person name="Kelley T."/>
            <person name="LaBaer J."/>
            <person name="Lin Y."/>
            <person name="Phelan M."/>
            <person name="Farmer A."/>
        </authorList>
    </citation>
    <scope>NUCLEOTIDE SEQUENCE [LARGE SCALE MRNA]</scope>
</reference>
<reference key="5">
    <citation type="submission" date="2004-06" db="EMBL/GenBank/DDBJ databases">
        <title>Cloning of human full open reading frames in Gateway(TM) system entry vector (pDONR201).</title>
        <authorList>
            <person name="Halleck A."/>
            <person name="Ebert L."/>
            <person name="Mkoundinya M."/>
            <person name="Schick M."/>
            <person name="Eisenstein S."/>
            <person name="Neubert P."/>
            <person name="Kstrang K."/>
            <person name="Schatten R."/>
            <person name="Shen B."/>
            <person name="Henze S."/>
            <person name="Mar W."/>
            <person name="Korn B."/>
            <person name="Zuo D."/>
            <person name="Hu Y."/>
            <person name="LaBaer J."/>
        </authorList>
    </citation>
    <scope>NUCLEOTIDE SEQUENCE [LARGE SCALE MRNA]</scope>
</reference>
<reference key="6">
    <citation type="journal article" date="2004" name="Genome Res.">
        <title>The status, quality, and expansion of the NIH full-length cDNA project: the Mammalian Gene Collection (MGC).</title>
        <authorList>
            <consortium name="The MGC Project Team"/>
        </authorList>
    </citation>
    <scope>NUCLEOTIDE SEQUENCE [LARGE SCALE MRNA]</scope>
    <source>
        <tissue>Uterus</tissue>
    </source>
</reference>
<reference key="7">
    <citation type="journal article" date="1998" name="Genomics">
        <title>Evolutionarily conserved, 'acatalytic' carbonic anhydrase-related protein XI contains a sequence motif present in the neuropeptide sauvagine: the human CA-RP XI gene (CA11) is embedded between the secretor gene cluster and the DBP gene at 19q13.3.</title>
        <authorList>
            <person name="Lovejoy D.A."/>
            <person name="Hewett-Emmett D."/>
            <person name="Porter C.A."/>
            <person name="Cepoi D."/>
            <person name="Sheffield A."/>
            <person name="Vale W.W."/>
            <person name="Tashian R.E."/>
        </authorList>
    </citation>
    <scope>NUCLEOTIDE SEQUENCE [MRNA] OF 48-314</scope>
    <source>
        <tissue>Brain</tissue>
    </source>
</reference>
<reference key="8">
    <citation type="journal article" date="2005" name="J. Proteome Res.">
        <title>Human plasma N-glycoproteome analysis by immunoaffinity subtraction, hydrazide chemistry, and mass spectrometry.</title>
        <authorList>
            <person name="Liu T."/>
            <person name="Qian W.-J."/>
            <person name="Gritsenko M.A."/>
            <person name="Camp D.G. II"/>
            <person name="Monroe M.E."/>
            <person name="Moore R.J."/>
            <person name="Smith R.D."/>
        </authorList>
    </citation>
    <scope>GLYCOSYLATION [LARGE SCALE ANALYSIS] AT ASN-118</scope>
    <source>
        <tissue>Plasma</tissue>
    </source>
</reference>
<gene>
    <name type="primary">CA11</name>
    <name type="synonym">CARP2</name>
    <name type="ORF">UNQ211/PRO237</name>
</gene>
<sequence length="328" mass="36238">MGAAARLSAPRALVLWAALGAAAHIGPAPDPEDWWSYKDNLQGNFVPGPPFWGLVNAAWSLCAVGKRQSPVDVELKRVLYDPFLPPLRLSTGGEKLRGTLYNTGRHVSFLPAPRPVVNVSGGPLLYSHRLSELRLLFGARDGAGSEHQINHQGFSAEVQLIHFNQELYGNFSAASRGPNGLAILSLFVNVASTSNPFLSRLLNRDTITRISYKNDAYFLQDLSLELLFPESFGFITYQGSLSTPPCSETVTWILIDRALNITSLQMHSLRLLSQNPPSQIFQSLSGNSRPLQPLAHRALRGNRDPRHPERRCRGPNYRLHVDGVPHGR</sequence>
<comment type="function">
    <text>Does not have a catalytic activity.</text>
</comment>
<comment type="subcellular location">
    <subcellularLocation>
        <location evidence="5">Secreted</location>
    </subcellularLocation>
</comment>
<comment type="tissue specificity">
    <text>Expressed abundantly in the brain with moderate expression also present in spinal cord and thyroid.</text>
</comment>
<comment type="similarity">
    <text evidence="5">Belongs to the alpha-carbonic anhydrase family.</text>
</comment>
<keyword id="KW-0325">Glycoprotein</keyword>
<keyword id="KW-1267">Proteomics identification</keyword>
<keyword id="KW-1185">Reference proteome</keyword>
<keyword id="KW-0964">Secreted</keyword>
<keyword id="KW-0732">Signal</keyword>
<protein>
    <recommendedName>
        <fullName>Carbonic anhydrase-related protein 11</fullName>
    </recommendedName>
    <alternativeName>
        <fullName>CA-RP XI</fullName>
        <shortName>CA-XI</shortName>
        <shortName>CARP XI</shortName>
    </alternativeName>
    <alternativeName>
        <fullName>Carbonic anhydrase-related protein 2</fullName>
        <shortName>CA-RP II</shortName>
        <shortName>CARP-2</shortName>
    </alternativeName>
</protein>
<organism>
    <name type="scientific">Homo sapiens</name>
    <name type="common">Human</name>
    <dbReference type="NCBI Taxonomy" id="9606"/>
    <lineage>
        <taxon>Eukaryota</taxon>
        <taxon>Metazoa</taxon>
        <taxon>Chordata</taxon>
        <taxon>Craniata</taxon>
        <taxon>Vertebrata</taxon>
        <taxon>Euteleostomi</taxon>
        <taxon>Mammalia</taxon>
        <taxon>Eutheria</taxon>
        <taxon>Euarchontoglires</taxon>
        <taxon>Primates</taxon>
        <taxon>Haplorrhini</taxon>
        <taxon>Catarrhini</taxon>
        <taxon>Hominidae</taxon>
        <taxon>Homo</taxon>
    </lineage>
</organism>